<keyword id="KW-0028">Amino-acid biosynthesis</keyword>
<keyword id="KW-0055">Arginine biosynthesis</keyword>
<keyword id="KW-0067">ATP-binding</keyword>
<keyword id="KW-0436">Ligase</keyword>
<keyword id="KW-0460">Magnesium</keyword>
<keyword id="KW-0464">Manganese</keyword>
<keyword id="KW-0479">Metal-binding</keyword>
<keyword id="KW-0547">Nucleotide-binding</keyword>
<keyword id="KW-0665">Pyrimidine biosynthesis</keyword>
<keyword id="KW-1185">Reference proteome</keyword>
<keyword id="KW-0677">Repeat</keyword>
<protein>
    <recommendedName>
        <fullName evidence="1">Carbamoyl phosphate synthase large chain</fullName>
        <ecNumber evidence="1">6.3.4.16</ecNumber>
        <ecNumber evidence="1">6.3.5.5</ecNumber>
    </recommendedName>
    <alternativeName>
        <fullName evidence="1">Carbamoyl phosphate synthetase ammonia chain</fullName>
    </alternativeName>
</protein>
<sequence length="1060" mass="116717">MPKRTDIKKIMVIGSGPIIIGQAAEFDYAGTQACLALKEEGYEVVLVNSNPATIMTDKEIADHVYIEPITLEFVSRILRKERPDALLPTLGGQTGLNMAMELSESGILDELNVELLGTKLSAIDQAEDRDLFKQLMEELEQPIPESEIVNTVEQAVAFAKRIGYPIIVRPAFTLGGTGGGMCDTEEELRQIAENGLKLSPVTQCLIEKSIAGFKEIEYEVMRDSADNAIVVCNMENFDPVGIHTGDSIVFAPSQTLSDYEYQMLRDASLKIIRALKIEGGCNVQLALDPHSFNYYVIEVNPRVSRSSALASKATGYPIAKLAAKIAVGLTLDEMKNPVTGTTYAEFEPALDYVVSKIPRWPFDKFEKGARELGTQMKATGEVMAIGRNIEESLLKAVRSLEIGAYHNELAELSHVSDLELTKKMVHAQDDRLFYLSEAIRRGYSIEELQSLTKIDLFFLDKLLHIIEIETALESHVDNVAVLKEAKQNGFSDRKIAALWGQTEQAIADFRRANQIVPVYKMVDTCAAEFESHTPYFYSTYEVENESNVSKKPSVLVLGSGPIRIGQGVEFDYATVHSVKAIQAAGYEAIIMNSNPETVSTDFSVSDKLYFEPLTLEDVMNVIDLENPIGVIVQFGGQTAINLAEPLTKQGVKILGTTIEDLDRAENRDLFEQALQELAIPQPPGDTATSAEEAVVIADRIGYPVLVRPSYVLGGRAMEIVENQKDLEDYMRHAVKASPEHPVLVDSYLLGQECEVDAICDGETVLIPGIMEHIERAGVHSGDSMAVYPPQYLSQEIQATIADYTKKLALGLNCVGMMNIQFVIHENRVYVIEVNPRASRTVPFLSKITGIPMAQVATKAILGEKLTDLGYQDGLYPESKQVHVKAPVFSFTKLQKVDTYLGPEMKSTGEVMGSDYYLEKALYKAFEASGLHLPSYGAVLFTIADETKEEALEIAKRFSAIGYSLVATEGTADFLAKHQLPVKKVTKISNPEGETVLDVIRNGNAQVVISTMDKNRSSANQDGFSIRREAVEHGIPLFTSLDTANAILKVLESRAFTTEAI</sequence>
<comment type="function">
    <text evidence="1">Large subunit of the glutamine-dependent carbamoyl phosphate synthetase (CPSase). CPSase catalyzes the formation of carbamoyl phosphate from the ammonia moiety of glutamine, carbonate, and phosphate donated by ATP, constituting the first step of 2 biosynthetic pathways, one leading to arginine and/or urea and the other to pyrimidine nucleotides. The large subunit (synthetase) binds the substrates ammonia (free or transferred from glutamine from the small subunit), hydrogencarbonate and ATP and carries out an ATP-coupled ligase reaction, activating hydrogencarbonate by forming carboxy phosphate which reacts with ammonia to form carbamoyl phosphate.</text>
</comment>
<comment type="catalytic activity">
    <reaction evidence="1">
        <text>hydrogencarbonate + L-glutamine + 2 ATP + H2O = carbamoyl phosphate + L-glutamate + 2 ADP + phosphate + 2 H(+)</text>
        <dbReference type="Rhea" id="RHEA:18633"/>
        <dbReference type="ChEBI" id="CHEBI:15377"/>
        <dbReference type="ChEBI" id="CHEBI:15378"/>
        <dbReference type="ChEBI" id="CHEBI:17544"/>
        <dbReference type="ChEBI" id="CHEBI:29985"/>
        <dbReference type="ChEBI" id="CHEBI:30616"/>
        <dbReference type="ChEBI" id="CHEBI:43474"/>
        <dbReference type="ChEBI" id="CHEBI:58228"/>
        <dbReference type="ChEBI" id="CHEBI:58359"/>
        <dbReference type="ChEBI" id="CHEBI:456216"/>
        <dbReference type="EC" id="6.3.5.5"/>
    </reaction>
</comment>
<comment type="catalytic activity">
    <molecule>Carbamoyl phosphate synthase large chain</molecule>
    <reaction evidence="1">
        <text>hydrogencarbonate + NH4(+) + 2 ATP = carbamoyl phosphate + 2 ADP + phosphate + 2 H(+)</text>
        <dbReference type="Rhea" id="RHEA:18029"/>
        <dbReference type="ChEBI" id="CHEBI:15378"/>
        <dbReference type="ChEBI" id="CHEBI:17544"/>
        <dbReference type="ChEBI" id="CHEBI:28938"/>
        <dbReference type="ChEBI" id="CHEBI:30616"/>
        <dbReference type="ChEBI" id="CHEBI:43474"/>
        <dbReference type="ChEBI" id="CHEBI:58228"/>
        <dbReference type="ChEBI" id="CHEBI:456216"/>
        <dbReference type="EC" id="6.3.4.16"/>
    </reaction>
</comment>
<comment type="cofactor">
    <cofactor evidence="1">
        <name>Mg(2+)</name>
        <dbReference type="ChEBI" id="CHEBI:18420"/>
    </cofactor>
    <cofactor evidence="1">
        <name>Mn(2+)</name>
        <dbReference type="ChEBI" id="CHEBI:29035"/>
    </cofactor>
    <text evidence="1">Binds 4 Mg(2+) or Mn(2+) ions per subunit.</text>
</comment>
<comment type="pathway">
    <text evidence="1">Amino-acid biosynthesis; L-arginine biosynthesis; carbamoyl phosphate from bicarbonate: step 1/1.</text>
</comment>
<comment type="pathway">
    <text evidence="1">Pyrimidine metabolism; UMP biosynthesis via de novo pathway; (S)-dihydroorotate from bicarbonate: step 1/3.</text>
</comment>
<comment type="subunit">
    <text evidence="1">Composed of two chains; the small (or glutamine) chain promotes the hydrolysis of glutamine to ammonia, which is used by the large (or ammonia) chain to synthesize carbamoyl phosphate. Tetramer of heterodimers (alpha,beta)4.</text>
</comment>
<comment type="domain">
    <text evidence="1">The large subunit is composed of 2 ATP-grasp domains that are involved in binding the 2 ATP molecules needed for carbamoyl phosphate synthesis. The N-terminal ATP-grasp domain (referred to as the carboxyphosphate synthetic component) catalyzes the ATP-dependent phosphorylation of hydrogencarbonate to carboxyphosphate and the subsequent nucleophilic attack by ammonia to form a carbamate intermediate. The C-terminal ATP-grasp domain (referred to as the carbamoyl phosphate synthetic component) then catalyzes the phosphorylation of carbamate with the second ATP to form the end product carbamoyl phosphate. The reactive and unstable enzyme intermediates are sequentially channeled from one active site to the next through the interior of the protein over a distance of at least 96 A.</text>
</comment>
<comment type="similarity">
    <text evidence="1">Belongs to the CarB family.</text>
</comment>
<evidence type="ECO:0000255" key="1">
    <source>
        <dbReference type="HAMAP-Rule" id="MF_01210"/>
    </source>
</evidence>
<accession>Q834E2</accession>
<feature type="chain" id="PRO_1000066350" description="Carbamoyl phosphate synthase large chain">
    <location>
        <begin position="1"/>
        <end position="1060"/>
    </location>
</feature>
<feature type="domain" description="ATP-grasp 1" evidence="1">
    <location>
        <begin position="133"/>
        <end position="327"/>
    </location>
</feature>
<feature type="domain" description="ATP-grasp 2" evidence="1">
    <location>
        <begin position="671"/>
        <end position="861"/>
    </location>
</feature>
<feature type="domain" description="MGS-like" evidence="1">
    <location>
        <begin position="930"/>
        <end position="1060"/>
    </location>
</feature>
<feature type="region of interest" description="Carboxyphosphate synthetic domain" evidence="1">
    <location>
        <begin position="1"/>
        <end position="401"/>
    </location>
</feature>
<feature type="region of interest" description="Oligomerization domain" evidence="1">
    <location>
        <begin position="402"/>
        <end position="546"/>
    </location>
</feature>
<feature type="region of interest" description="Carbamoyl phosphate synthetic domain" evidence="1">
    <location>
        <begin position="547"/>
        <end position="929"/>
    </location>
</feature>
<feature type="region of interest" description="Allosteric domain" evidence="1">
    <location>
        <begin position="930"/>
        <end position="1060"/>
    </location>
</feature>
<feature type="binding site" evidence="1">
    <location>
        <position position="129"/>
    </location>
    <ligand>
        <name>ATP</name>
        <dbReference type="ChEBI" id="CHEBI:30616"/>
        <label>1</label>
    </ligand>
</feature>
<feature type="binding site" evidence="1">
    <location>
        <position position="169"/>
    </location>
    <ligand>
        <name>ATP</name>
        <dbReference type="ChEBI" id="CHEBI:30616"/>
        <label>1</label>
    </ligand>
</feature>
<feature type="binding site" evidence="1">
    <location>
        <position position="175"/>
    </location>
    <ligand>
        <name>ATP</name>
        <dbReference type="ChEBI" id="CHEBI:30616"/>
        <label>1</label>
    </ligand>
</feature>
<feature type="binding site" evidence="1">
    <location>
        <position position="176"/>
    </location>
    <ligand>
        <name>ATP</name>
        <dbReference type="ChEBI" id="CHEBI:30616"/>
        <label>1</label>
    </ligand>
</feature>
<feature type="binding site" evidence="1">
    <location>
        <position position="208"/>
    </location>
    <ligand>
        <name>ATP</name>
        <dbReference type="ChEBI" id="CHEBI:30616"/>
        <label>1</label>
    </ligand>
</feature>
<feature type="binding site" evidence="1">
    <location>
        <position position="210"/>
    </location>
    <ligand>
        <name>ATP</name>
        <dbReference type="ChEBI" id="CHEBI:30616"/>
        <label>1</label>
    </ligand>
</feature>
<feature type="binding site" evidence="1">
    <location>
        <position position="215"/>
    </location>
    <ligand>
        <name>ATP</name>
        <dbReference type="ChEBI" id="CHEBI:30616"/>
        <label>1</label>
    </ligand>
</feature>
<feature type="binding site" evidence="1">
    <location>
        <position position="241"/>
    </location>
    <ligand>
        <name>ATP</name>
        <dbReference type="ChEBI" id="CHEBI:30616"/>
        <label>1</label>
    </ligand>
</feature>
<feature type="binding site" evidence="1">
    <location>
        <position position="242"/>
    </location>
    <ligand>
        <name>ATP</name>
        <dbReference type="ChEBI" id="CHEBI:30616"/>
        <label>1</label>
    </ligand>
</feature>
<feature type="binding site" evidence="1">
    <location>
        <position position="243"/>
    </location>
    <ligand>
        <name>ATP</name>
        <dbReference type="ChEBI" id="CHEBI:30616"/>
        <label>1</label>
    </ligand>
</feature>
<feature type="binding site" evidence="1">
    <location>
        <position position="284"/>
    </location>
    <ligand>
        <name>ATP</name>
        <dbReference type="ChEBI" id="CHEBI:30616"/>
        <label>1</label>
    </ligand>
</feature>
<feature type="binding site" evidence="1">
    <location>
        <position position="284"/>
    </location>
    <ligand>
        <name>Mg(2+)</name>
        <dbReference type="ChEBI" id="CHEBI:18420"/>
        <label>1</label>
    </ligand>
</feature>
<feature type="binding site" evidence="1">
    <location>
        <position position="284"/>
    </location>
    <ligand>
        <name>Mn(2+)</name>
        <dbReference type="ChEBI" id="CHEBI:29035"/>
        <label>1</label>
    </ligand>
</feature>
<feature type="binding site" evidence="1">
    <location>
        <position position="298"/>
    </location>
    <ligand>
        <name>ATP</name>
        <dbReference type="ChEBI" id="CHEBI:30616"/>
        <label>1</label>
    </ligand>
</feature>
<feature type="binding site" evidence="1">
    <location>
        <position position="298"/>
    </location>
    <ligand>
        <name>Mg(2+)</name>
        <dbReference type="ChEBI" id="CHEBI:18420"/>
        <label>1</label>
    </ligand>
</feature>
<feature type="binding site" evidence="1">
    <location>
        <position position="298"/>
    </location>
    <ligand>
        <name>Mg(2+)</name>
        <dbReference type="ChEBI" id="CHEBI:18420"/>
        <label>2</label>
    </ligand>
</feature>
<feature type="binding site" evidence="1">
    <location>
        <position position="298"/>
    </location>
    <ligand>
        <name>Mn(2+)</name>
        <dbReference type="ChEBI" id="CHEBI:29035"/>
        <label>1</label>
    </ligand>
</feature>
<feature type="binding site" evidence="1">
    <location>
        <position position="298"/>
    </location>
    <ligand>
        <name>Mn(2+)</name>
        <dbReference type="ChEBI" id="CHEBI:29035"/>
        <label>2</label>
    </ligand>
</feature>
<feature type="binding site" evidence="1">
    <location>
        <position position="300"/>
    </location>
    <ligand>
        <name>Mg(2+)</name>
        <dbReference type="ChEBI" id="CHEBI:18420"/>
        <label>2</label>
    </ligand>
</feature>
<feature type="binding site" evidence="1">
    <location>
        <position position="300"/>
    </location>
    <ligand>
        <name>Mn(2+)</name>
        <dbReference type="ChEBI" id="CHEBI:29035"/>
        <label>2</label>
    </ligand>
</feature>
<feature type="binding site" evidence="1">
    <location>
        <position position="707"/>
    </location>
    <ligand>
        <name>ATP</name>
        <dbReference type="ChEBI" id="CHEBI:30616"/>
        <label>2</label>
    </ligand>
</feature>
<feature type="binding site" evidence="1">
    <location>
        <position position="746"/>
    </location>
    <ligand>
        <name>ATP</name>
        <dbReference type="ChEBI" id="CHEBI:30616"/>
        <label>2</label>
    </ligand>
</feature>
<feature type="binding site" evidence="1">
    <location>
        <position position="748"/>
    </location>
    <ligand>
        <name>ATP</name>
        <dbReference type="ChEBI" id="CHEBI:30616"/>
        <label>2</label>
    </ligand>
</feature>
<feature type="binding site" evidence="1">
    <location>
        <position position="752"/>
    </location>
    <ligand>
        <name>ATP</name>
        <dbReference type="ChEBI" id="CHEBI:30616"/>
        <label>2</label>
    </ligand>
</feature>
<feature type="binding site" evidence="1">
    <location>
        <position position="777"/>
    </location>
    <ligand>
        <name>ATP</name>
        <dbReference type="ChEBI" id="CHEBI:30616"/>
        <label>2</label>
    </ligand>
</feature>
<feature type="binding site" evidence="1">
    <location>
        <position position="778"/>
    </location>
    <ligand>
        <name>ATP</name>
        <dbReference type="ChEBI" id="CHEBI:30616"/>
        <label>2</label>
    </ligand>
</feature>
<feature type="binding site" evidence="1">
    <location>
        <position position="779"/>
    </location>
    <ligand>
        <name>ATP</name>
        <dbReference type="ChEBI" id="CHEBI:30616"/>
        <label>2</label>
    </ligand>
</feature>
<feature type="binding site" evidence="1">
    <location>
        <position position="780"/>
    </location>
    <ligand>
        <name>ATP</name>
        <dbReference type="ChEBI" id="CHEBI:30616"/>
        <label>2</label>
    </ligand>
</feature>
<feature type="binding site" evidence="1">
    <location>
        <position position="820"/>
    </location>
    <ligand>
        <name>ATP</name>
        <dbReference type="ChEBI" id="CHEBI:30616"/>
        <label>2</label>
    </ligand>
</feature>
<feature type="binding site" evidence="1">
    <location>
        <position position="820"/>
    </location>
    <ligand>
        <name>Mg(2+)</name>
        <dbReference type="ChEBI" id="CHEBI:18420"/>
        <label>3</label>
    </ligand>
</feature>
<feature type="binding site" evidence="1">
    <location>
        <position position="820"/>
    </location>
    <ligand>
        <name>Mn(2+)</name>
        <dbReference type="ChEBI" id="CHEBI:29035"/>
        <label>3</label>
    </ligand>
</feature>
<feature type="binding site" evidence="1">
    <location>
        <position position="832"/>
    </location>
    <ligand>
        <name>ATP</name>
        <dbReference type="ChEBI" id="CHEBI:30616"/>
        <label>2</label>
    </ligand>
</feature>
<feature type="binding site" evidence="1">
    <location>
        <position position="832"/>
    </location>
    <ligand>
        <name>Mg(2+)</name>
        <dbReference type="ChEBI" id="CHEBI:18420"/>
        <label>3</label>
    </ligand>
</feature>
<feature type="binding site" evidence="1">
    <location>
        <position position="832"/>
    </location>
    <ligand>
        <name>Mg(2+)</name>
        <dbReference type="ChEBI" id="CHEBI:18420"/>
        <label>4</label>
    </ligand>
</feature>
<feature type="binding site" evidence="1">
    <location>
        <position position="832"/>
    </location>
    <ligand>
        <name>Mn(2+)</name>
        <dbReference type="ChEBI" id="CHEBI:29035"/>
        <label>3</label>
    </ligand>
</feature>
<feature type="binding site" evidence="1">
    <location>
        <position position="832"/>
    </location>
    <ligand>
        <name>Mn(2+)</name>
        <dbReference type="ChEBI" id="CHEBI:29035"/>
        <label>4</label>
    </ligand>
</feature>
<feature type="binding site" evidence="1">
    <location>
        <position position="834"/>
    </location>
    <ligand>
        <name>Mg(2+)</name>
        <dbReference type="ChEBI" id="CHEBI:18420"/>
        <label>4</label>
    </ligand>
</feature>
<feature type="binding site" evidence="1">
    <location>
        <position position="834"/>
    </location>
    <ligand>
        <name>Mn(2+)</name>
        <dbReference type="ChEBI" id="CHEBI:29035"/>
        <label>4</label>
    </ligand>
</feature>
<name>CARB_ENTFA</name>
<proteinExistence type="inferred from homology"/>
<reference key="1">
    <citation type="journal article" date="2003" name="Science">
        <title>Role of mobile DNA in the evolution of vancomycin-resistant Enterococcus faecalis.</title>
        <authorList>
            <person name="Paulsen I.T."/>
            <person name="Banerjei L."/>
            <person name="Myers G.S.A."/>
            <person name="Nelson K.E."/>
            <person name="Seshadri R."/>
            <person name="Read T.D."/>
            <person name="Fouts D.E."/>
            <person name="Eisen J.A."/>
            <person name="Gill S.R."/>
            <person name="Heidelberg J.F."/>
            <person name="Tettelin H."/>
            <person name="Dodson R.J."/>
            <person name="Umayam L.A."/>
            <person name="Brinkac L.M."/>
            <person name="Beanan M.J."/>
            <person name="Daugherty S.C."/>
            <person name="DeBoy R.T."/>
            <person name="Durkin S.A."/>
            <person name="Kolonay J.F."/>
            <person name="Madupu R."/>
            <person name="Nelson W.C."/>
            <person name="Vamathevan J.J."/>
            <person name="Tran B."/>
            <person name="Upton J."/>
            <person name="Hansen T."/>
            <person name="Shetty J."/>
            <person name="Khouri H.M."/>
            <person name="Utterback T.R."/>
            <person name="Radune D."/>
            <person name="Ketchum K.A."/>
            <person name="Dougherty B.A."/>
            <person name="Fraser C.M."/>
        </authorList>
    </citation>
    <scope>NUCLEOTIDE SEQUENCE [LARGE SCALE GENOMIC DNA]</scope>
    <source>
        <strain>ATCC 700802 / V583</strain>
    </source>
</reference>
<gene>
    <name evidence="1" type="primary">carB</name>
    <name type="ordered locus">EF_1716</name>
</gene>
<dbReference type="EC" id="6.3.4.16" evidence="1"/>
<dbReference type="EC" id="6.3.5.5" evidence="1"/>
<dbReference type="EMBL" id="AE016830">
    <property type="protein sequence ID" value="AAO81492.1"/>
    <property type="molecule type" value="Genomic_DNA"/>
</dbReference>
<dbReference type="RefSeq" id="NP_815422.1">
    <property type="nucleotide sequence ID" value="NC_004668.1"/>
</dbReference>
<dbReference type="RefSeq" id="WP_010774214.1">
    <property type="nucleotide sequence ID" value="NZ_KE136528.1"/>
</dbReference>
<dbReference type="SMR" id="Q834E2"/>
<dbReference type="STRING" id="226185.EF_1716"/>
<dbReference type="EnsemblBacteria" id="AAO81492">
    <property type="protein sequence ID" value="AAO81492"/>
    <property type="gene ID" value="EF_1716"/>
</dbReference>
<dbReference type="KEGG" id="efa:EF1716"/>
<dbReference type="PATRIC" id="fig|226185.45.peg.1796"/>
<dbReference type="eggNOG" id="COG0458">
    <property type="taxonomic scope" value="Bacteria"/>
</dbReference>
<dbReference type="HOGENOM" id="CLU_000513_1_2_9"/>
<dbReference type="UniPathway" id="UPA00068">
    <property type="reaction ID" value="UER00171"/>
</dbReference>
<dbReference type="UniPathway" id="UPA00070">
    <property type="reaction ID" value="UER00115"/>
</dbReference>
<dbReference type="Proteomes" id="UP000001415">
    <property type="component" value="Chromosome"/>
</dbReference>
<dbReference type="GO" id="GO:0005737">
    <property type="term" value="C:cytoplasm"/>
    <property type="evidence" value="ECO:0007669"/>
    <property type="project" value="TreeGrafter"/>
</dbReference>
<dbReference type="GO" id="GO:0005524">
    <property type="term" value="F:ATP binding"/>
    <property type="evidence" value="ECO:0007669"/>
    <property type="project" value="UniProtKB-UniRule"/>
</dbReference>
<dbReference type="GO" id="GO:0004087">
    <property type="term" value="F:carbamoyl-phosphate synthase (ammonia) activity"/>
    <property type="evidence" value="ECO:0007669"/>
    <property type="project" value="RHEA"/>
</dbReference>
<dbReference type="GO" id="GO:0004088">
    <property type="term" value="F:carbamoyl-phosphate synthase (glutamine-hydrolyzing) activity"/>
    <property type="evidence" value="ECO:0007669"/>
    <property type="project" value="UniProtKB-UniRule"/>
</dbReference>
<dbReference type="GO" id="GO:0046872">
    <property type="term" value="F:metal ion binding"/>
    <property type="evidence" value="ECO:0007669"/>
    <property type="project" value="UniProtKB-KW"/>
</dbReference>
<dbReference type="GO" id="GO:0044205">
    <property type="term" value="P:'de novo' UMP biosynthetic process"/>
    <property type="evidence" value="ECO:0007669"/>
    <property type="project" value="UniProtKB-UniRule"/>
</dbReference>
<dbReference type="GO" id="GO:0006541">
    <property type="term" value="P:glutamine metabolic process"/>
    <property type="evidence" value="ECO:0007669"/>
    <property type="project" value="TreeGrafter"/>
</dbReference>
<dbReference type="GO" id="GO:0006526">
    <property type="term" value="P:L-arginine biosynthetic process"/>
    <property type="evidence" value="ECO:0007669"/>
    <property type="project" value="UniProtKB-UniRule"/>
</dbReference>
<dbReference type="CDD" id="cd01424">
    <property type="entry name" value="MGS_CPS_II"/>
    <property type="match status" value="1"/>
</dbReference>
<dbReference type="FunFam" id="1.10.1030.10:FF:000002">
    <property type="entry name" value="Carbamoyl-phosphate synthase large chain"/>
    <property type="match status" value="1"/>
</dbReference>
<dbReference type="FunFam" id="3.30.1490.20:FF:000001">
    <property type="entry name" value="Carbamoyl-phosphate synthase large chain"/>
    <property type="match status" value="1"/>
</dbReference>
<dbReference type="FunFam" id="3.30.470.20:FF:000001">
    <property type="entry name" value="Carbamoyl-phosphate synthase large chain"/>
    <property type="match status" value="1"/>
</dbReference>
<dbReference type="FunFam" id="3.30.470.20:FF:000026">
    <property type="entry name" value="Carbamoyl-phosphate synthase large chain"/>
    <property type="match status" value="1"/>
</dbReference>
<dbReference type="FunFam" id="3.40.50.20:FF:000001">
    <property type="entry name" value="Carbamoyl-phosphate synthase large chain"/>
    <property type="match status" value="2"/>
</dbReference>
<dbReference type="Gene3D" id="3.40.50.20">
    <property type="match status" value="2"/>
</dbReference>
<dbReference type="Gene3D" id="3.30.1490.20">
    <property type="entry name" value="ATP-grasp fold, A domain"/>
    <property type="match status" value="1"/>
</dbReference>
<dbReference type="Gene3D" id="3.30.470.20">
    <property type="entry name" value="ATP-grasp fold, B domain"/>
    <property type="match status" value="2"/>
</dbReference>
<dbReference type="Gene3D" id="1.10.1030.10">
    <property type="entry name" value="Carbamoyl-phosphate synthetase, large subunit oligomerisation domain"/>
    <property type="match status" value="1"/>
</dbReference>
<dbReference type="Gene3D" id="3.40.50.1380">
    <property type="entry name" value="Methylglyoxal synthase-like domain"/>
    <property type="match status" value="1"/>
</dbReference>
<dbReference type="HAMAP" id="MF_01210_A">
    <property type="entry name" value="CPSase_L_chain_A"/>
    <property type="match status" value="1"/>
</dbReference>
<dbReference type="HAMAP" id="MF_01210_B">
    <property type="entry name" value="CPSase_L_chain_B"/>
    <property type="match status" value="1"/>
</dbReference>
<dbReference type="InterPro" id="IPR011761">
    <property type="entry name" value="ATP-grasp"/>
</dbReference>
<dbReference type="InterPro" id="IPR013815">
    <property type="entry name" value="ATP_grasp_subdomain_1"/>
</dbReference>
<dbReference type="InterPro" id="IPR006275">
    <property type="entry name" value="CarbamoylP_synth_lsu"/>
</dbReference>
<dbReference type="InterPro" id="IPR005480">
    <property type="entry name" value="CarbamoylP_synth_lsu_oligo"/>
</dbReference>
<dbReference type="InterPro" id="IPR036897">
    <property type="entry name" value="CarbamoylP_synth_lsu_oligo_sf"/>
</dbReference>
<dbReference type="InterPro" id="IPR005479">
    <property type="entry name" value="CbamoylP_synth_lsu-like_ATP-bd"/>
</dbReference>
<dbReference type="InterPro" id="IPR005483">
    <property type="entry name" value="CbamoylP_synth_lsu_CPSase_dom"/>
</dbReference>
<dbReference type="InterPro" id="IPR011607">
    <property type="entry name" value="MGS-like_dom"/>
</dbReference>
<dbReference type="InterPro" id="IPR036914">
    <property type="entry name" value="MGS-like_dom_sf"/>
</dbReference>
<dbReference type="InterPro" id="IPR033937">
    <property type="entry name" value="MGS_CPS_CarB"/>
</dbReference>
<dbReference type="InterPro" id="IPR016185">
    <property type="entry name" value="PreATP-grasp_dom_sf"/>
</dbReference>
<dbReference type="NCBIfam" id="TIGR01369">
    <property type="entry name" value="CPSaseII_lrg"/>
    <property type="match status" value="1"/>
</dbReference>
<dbReference type="NCBIfam" id="NF003671">
    <property type="entry name" value="PRK05294.1"/>
    <property type="match status" value="1"/>
</dbReference>
<dbReference type="NCBIfam" id="NF009455">
    <property type="entry name" value="PRK12815.1"/>
    <property type="match status" value="1"/>
</dbReference>
<dbReference type="PANTHER" id="PTHR11405:SF53">
    <property type="entry name" value="CARBAMOYL-PHOSPHATE SYNTHASE [AMMONIA], MITOCHONDRIAL"/>
    <property type="match status" value="1"/>
</dbReference>
<dbReference type="PANTHER" id="PTHR11405">
    <property type="entry name" value="CARBAMOYLTRANSFERASE FAMILY MEMBER"/>
    <property type="match status" value="1"/>
</dbReference>
<dbReference type="Pfam" id="PF02786">
    <property type="entry name" value="CPSase_L_D2"/>
    <property type="match status" value="2"/>
</dbReference>
<dbReference type="Pfam" id="PF02787">
    <property type="entry name" value="CPSase_L_D3"/>
    <property type="match status" value="1"/>
</dbReference>
<dbReference type="Pfam" id="PF02142">
    <property type="entry name" value="MGS"/>
    <property type="match status" value="1"/>
</dbReference>
<dbReference type="PRINTS" id="PR00098">
    <property type="entry name" value="CPSASE"/>
</dbReference>
<dbReference type="SMART" id="SM01096">
    <property type="entry name" value="CPSase_L_D3"/>
    <property type="match status" value="1"/>
</dbReference>
<dbReference type="SMART" id="SM01209">
    <property type="entry name" value="GARS_A"/>
    <property type="match status" value="1"/>
</dbReference>
<dbReference type="SMART" id="SM00851">
    <property type="entry name" value="MGS"/>
    <property type="match status" value="1"/>
</dbReference>
<dbReference type="SUPFAM" id="SSF48108">
    <property type="entry name" value="Carbamoyl phosphate synthetase, large subunit connection domain"/>
    <property type="match status" value="1"/>
</dbReference>
<dbReference type="SUPFAM" id="SSF56059">
    <property type="entry name" value="Glutathione synthetase ATP-binding domain-like"/>
    <property type="match status" value="2"/>
</dbReference>
<dbReference type="SUPFAM" id="SSF52335">
    <property type="entry name" value="Methylglyoxal synthase-like"/>
    <property type="match status" value="1"/>
</dbReference>
<dbReference type="SUPFAM" id="SSF52440">
    <property type="entry name" value="PreATP-grasp domain"/>
    <property type="match status" value="2"/>
</dbReference>
<dbReference type="PROSITE" id="PS50975">
    <property type="entry name" value="ATP_GRASP"/>
    <property type="match status" value="2"/>
</dbReference>
<dbReference type="PROSITE" id="PS00866">
    <property type="entry name" value="CPSASE_1"/>
    <property type="match status" value="2"/>
</dbReference>
<dbReference type="PROSITE" id="PS00867">
    <property type="entry name" value="CPSASE_2"/>
    <property type="match status" value="2"/>
</dbReference>
<dbReference type="PROSITE" id="PS51855">
    <property type="entry name" value="MGS"/>
    <property type="match status" value="1"/>
</dbReference>
<organism>
    <name type="scientific">Enterococcus faecalis (strain ATCC 700802 / V583)</name>
    <dbReference type="NCBI Taxonomy" id="226185"/>
    <lineage>
        <taxon>Bacteria</taxon>
        <taxon>Bacillati</taxon>
        <taxon>Bacillota</taxon>
        <taxon>Bacilli</taxon>
        <taxon>Lactobacillales</taxon>
        <taxon>Enterococcaceae</taxon>
        <taxon>Enterococcus</taxon>
    </lineage>
</organism>